<protein>
    <recommendedName>
        <fullName evidence="5">T-box protein 38</fullName>
    </recommendedName>
</protein>
<keyword id="KW-0238">DNA-binding</keyword>
<keyword id="KW-0539">Nucleus</keyword>
<keyword id="KW-1185">Reference proteome</keyword>
<keyword id="KW-0804">Transcription</keyword>
<keyword id="KW-0805">Transcription regulation</keyword>
<comment type="function">
    <text evidence="1 4">Transcription factor (By similarity). Required for mesodermal induction, acting redundantly with transcription factor tbx-37 (PubMed:15056620). Together with tbx-37, acts by inducing cell fates in the AB lineage, thereby playing a role in development of the anterior pharynx (PubMed:15056620).</text>
</comment>
<comment type="interaction">
    <interactant intactId="EBI-2413404">
        <id>Q9XVD5</id>
    </interactant>
    <interactant intactId="EBI-317870">
        <id>Q10666</id>
        <label>pop-1</label>
    </interactant>
    <organismsDiffer>false</organismsDiffer>
    <experiments>3</experiments>
</comment>
<comment type="subcellular location">
    <subcellularLocation>
        <location evidence="2 4">Nucleus</location>
    </subcellularLocation>
</comment>
<comment type="developmental stage">
    <text evidence="4">Expressed in cells of the ABa lineage at the 24-cell stage of embryogenesis (at protein level).</text>
</comment>
<dbReference type="EMBL" id="Z81475">
    <property type="protein sequence ID" value="CAB03909.1"/>
    <property type="molecule type" value="Genomic_DNA"/>
</dbReference>
<dbReference type="PIR" id="T19424">
    <property type="entry name" value="T19424"/>
</dbReference>
<dbReference type="RefSeq" id="NP_499526.1">
    <property type="nucleotide sequence ID" value="NM_067125.3"/>
</dbReference>
<dbReference type="SMR" id="Q9XVD5"/>
<dbReference type="BioGRID" id="47701">
    <property type="interactions" value="8"/>
</dbReference>
<dbReference type="FunCoup" id="Q9XVD5">
    <property type="interactions" value="219"/>
</dbReference>
<dbReference type="IntAct" id="Q9XVD5">
    <property type="interactions" value="8"/>
</dbReference>
<dbReference type="STRING" id="6239.C24H11.3.1"/>
<dbReference type="PaxDb" id="6239-C24H11.3"/>
<dbReference type="EnsemblMetazoa" id="C24H11.3.1">
    <property type="protein sequence ID" value="C24H11.3.1"/>
    <property type="gene ID" value="WBGene00006557"/>
</dbReference>
<dbReference type="GeneID" id="182861"/>
<dbReference type="KEGG" id="cel:CELE_C24H11.3"/>
<dbReference type="UCSC" id="C24H11.3">
    <property type="organism name" value="c. elegans"/>
</dbReference>
<dbReference type="AGR" id="WB:WBGene00006557"/>
<dbReference type="CTD" id="182861"/>
<dbReference type="WormBase" id="C24H11.3">
    <property type="protein sequence ID" value="CE18526"/>
    <property type="gene ID" value="WBGene00006557"/>
    <property type="gene designation" value="tbx-38"/>
</dbReference>
<dbReference type="eggNOG" id="KOG3585">
    <property type="taxonomic scope" value="Eukaryota"/>
</dbReference>
<dbReference type="GeneTree" id="ENSGT00970000196046"/>
<dbReference type="HOGENOM" id="CLU_032588_0_0_1"/>
<dbReference type="InParanoid" id="Q9XVD5"/>
<dbReference type="OMA" id="TVRYQPH"/>
<dbReference type="OrthoDB" id="7442607at2759"/>
<dbReference type="PhylomeDB" id="Q9XVD5"/>
<dbReference type="SignaLink" id="Q9XVD5"/>
<dbReference type="PRO" id="PR:Q9XVD5"/>
<dbReference type="Proteomes" id="UP000001940">
    <property type="component" value="Chromosome III"/>
</dbReference>
<dbReference type="Bgee" id="WBGene00006557">
    <property type="expression patterns" value="Expressed in embryo and 2 other cell types or tissues"/>
</dbReference>
<dbReference type="GO" id="GO:0000785">
    <property type="term" value="C:chromatin"/>
    <property type="evidence" value="ECO:0000318"/>
    <property type="project" value="GO_Central"/>
</dbReference>
<dbReference type="GO" id="GO:0005634">
    <property type="term" value="C:nucleus"/>
    <property type="evidence" value="ECO:0000314"/>
    <property type="project" value="WormBase"/>
</dbReference>
<dbReference type="GO" id="GO:0000981">
    <property type="term" value="F:DNA-binding transcription factor activity, RNA polymerase II-specific"/>
    <property type="evidence" value="ECO:0000318"/>
    <property type="project" value="GO_Central"/>
</dbReference>
<dbReference type="GO" id="GO:0000978">
    <property type="term" value="F:RNA polymerase II cis-regulatory region sequence-specific DNA binding"/>
    <property type="evidence" value="ECO:0000318"/>
    <property type="project" value="GO_Central"/>
</dbReference>
<dbReference type="GO" id="GO:0001708">
    <property type="term" value="P:cell fate specification"/>
    <property type="evidence" value="ECO:0000318"/>
    <property type="project" value="GO_Central"/>
</dbReference>
<dbReference type="GO" id="GO:0160094">
    <property type="term" value="P:nematode pharynx development"/>
    <property type="evidence" value="ECO:0000316"/>
    <property type="project" value="WormBase"/>
</dbReference>
<dbReference type="GO" id="GO:0045893">
    <property type="term" value="P:positive regulation of DNA-templated transcription"/>
    <property type="evidence" value="ECO:0007669"/>
    <property type="project" value="InterPro"/>
</dbReference>
<dbReference type="GO" id="GO:0006357">
    <property type="term" value="P:regulation of transcription by RNA polymerase II"/>
    <property type="evidence" value="ECO:0000318"/>
    <property type="project" value="GO_Central"/>
</dbReference>
<dbReference type="CDD" id="cd00182">
    <property type="entry name" value="T-box"/>
    <property type="match status" value="1"/>
</dbReference>
<dbReference type="FunFam" id="2.60.40.820:FF:000013">
    <property type="entry name" value="T-box transcription factor tbx-9"/>
    <property type="match status" value="1"/>
</dbReference>
<dbReference type="Gene3D" id="2.60.40.820">
    <property type="entry name" value="Transcription factor, T-box"/>
    <property type="match status" value="1"/>
</dbReference>
<dbReference type="InterPro" id="IPR008967">
    <property type="entry name" value="p53-like_TF_DNA-bd_sf"/>
</dbReference>
<dbReference type="InterPro" id="IPR046360">
    <property type="entry name" value="T-box_DNA-bd"/>
</dbReference>
<dbReference type="InterPro" id="IPR036960">
    <property type="entry name" value="T-box_sf"/>
</dbReference>
<dbReference type="InterPro" id="IPR001699">
    <property type="entry name" value="TF_T-box"/>
</dbReference>
<dbReference type="InterPro" id="IPR018186">
    <property type="entry name" value="TF_T-box_CS"/>
</dbReference>
<dbReference type="PANTHER" id="PTHR11267:SF189">
    <property type="entry name" value="T-BOX PROTEIN 31-RELATED"/>
    <property type="match status" value="1"/>
</dbReference>
<dbReference type="PANTHER" id="PTHR11267">
    <property type="entry name" value="T-BOX PROTEIN-RELATED"/>
    <property type="match status" value="1"/>
</dbReference>
<dbReference type="Pfam" id="PF00907">
    <property type="entry name" value="T-box"/>
    <property type="match status" value="1"/>
</dbReference>
<dbReference type="PRINTS" id="PR00937">
    <property type="entry name" value="TBOX"/>
</dbReference>
<dbReference type="SMART" id="SM00425">
    <property type="entry name" value="TBOX"/>
    <property type="match status" value="1"/>
</dbReference>
<dbReference type="SUPFAM" id="SSF49417">
    <property type="entry name" value="p53-like transcription factors"/>
    <property type="match status" value="1"/>
</dbReference>
<dbReference type="PROSITE" id="PS01283">
    <property type="entry name" value="TBOX_1"/>
    <property type="match status" value="1"/>
</dbReference>
<dbReference type="PROSITE" id="PS01264">
    <property type="entry name" value="TBOX_2"/>
    <property type="match status" value="1"/>
</dbReference>
<dbReference type="PROSITE" id="PS50252">
    <property type="entry name" value="TBOX_3"/>
    <property type="match status" value="1"/>
</dbReference>
<name>TBX38_CAEEL</name>
<evidence type="ECO:0000250" key="1">
    <source>
        <dbReference type="UniProtKB" id="Q9UL17"/>
    </source>
</evidence>
<evidence type="ECO:0000255" key="2">
    <source>
        <dbReference type="PROSITE-ProRule" id="PRU00201"/>
    </source>
</evidence>
<evidence type="ECO:0000256" key="3">
    <source>
        <dbReference type="SAM" id="MobiDB-lite"/>
    </source>
</evidence>
<evidence type="ECO:0000269" key="4">
    <source>
    </source>
</evidence>
<evidence type="ECO:0000305" key="5"/>
<gene>
    <name type="primary">tbx-38</name>
    <name type="ORF">C24H11.3</name>
</gene>
<proteinExistence type="evidence at protein level"/>
<sequence>MYSCTSPSGIKVSLSTPEIWEEFYPKTEMIVTRNRGRVIFPHLDYIIKGLDPGSLYSIYIHLERVDGIKYKFDAGEWKEFAKGDPILPIQYKEHPRGKRTGAEWMSEPVSFAHIKITNNPEIKDQKVILVQSMHKHIPVVTVKQVRHYKTGYQEDFSGEQFRLEATEFMVVTAYQNEILKNLKVHHNKFASGFRSNGKRRLSSDSENSENSPPKRSKLVTPPTISPQIDLPQQTPYYFNQNFVAPQNYQPQFASAQNYNFEVQNNAQLAWNMYYQKQYEFWWQQQQMMMPGQPQELKNEFQSL</sequence>
<feature type="chain" id="PRO_0000184483" description="T-box protein 38">
    <location>
        <begin position="1"/>
        <end position="303"/>
    </location>
</feature>
<feature type="DNA-binding region" description="T-box" evidence="2">
    <location>
        <begin position="14"/>
        <end position="195"/>
    </location>
</feature>
<feature type="region of interest" description="Disordered" evidence="3">
    <location>
        <begin position="193"/>
        <end position="225"/>
    </location>
</feature>
<feature type="compositionally biased region" description="Low complexity" evidence="3">
    <location>
        <begin position="204"/>
        <end position="213"/>
    </location>
</feature>
<organism>
    <name type="scientific">Caenorhabditis elegans</name>
    <dbReference type="NCBI Taxonomy" id="6239"/>
    <lineage>
        <taxon>Eukaryota</taxon>
        <taxon>Metazoa</taxon>
        <taxon>Ecdysozoa</taxon>
        <taxon>Nematoda</taxon>
        <taxon>Chromadorea</taxon>
        <taxon>Rhabditida</taxon>
        <taxon>Rhabditina</taxon>
        <taxon>Rhabditomorpha</taxon>
        <taxon>Rhabditoidea</taxon>
        <taxon>Rhabditidae</taxon>
        <taxon>Peloderinae</taxon>
        <taxon>Caenorhabditis</taxon>
    </lineage>
</organism>
<accession>Q9XVD5</accession>
<reference key="1">
    <citation type="journal article" date="1998" name="Science">
        <title>Genome sequence of the nematode C. elegans: a platform for investigating biology.</title>
        <authorList>
            <consortium name="The C. elegans sequencing consortium"/>
        </authorList>
    </citation>
    <scope>NUCLEOTIDE SEQUENCE [LARGE SCALE GENOMIC DNA]</scope>
    <source>
        <strain>Bristol N2</strain>
    </source>
</reference>
<reference key="2">
    <citation type="journal article" date="2004" name="Development">
        <title>The T-box transcription factors TBX-37 and TBX-38 link GLP-1/Notch signaling to mesoderm induction in C. elegans embryos.</title>
        <authorList>
            <person name="Good K."/>
            <person name="Ciosk R."/>
            <person name="Nance J."/>
            <person name="Neves A."/>
            <person name="Hill R.J."/>
            <person name="Priess J.R."/>
        </authorList>
    </citation>
    <scope>FUNCTION</scope>
    <scope>SUBCELLULAR LOCATION</scope>
    <scope>DEVELOPMENTAL STAGE</scope>
</reference>